<proteinExistence type="inferred from homology"/>
<evidence type="ECO:0000255" key="1">
    <source>
        <dbReference type="HAMAP-Rule" id="MF_01571"/>
    </source>
</evidence>
<reference key="1">
    <citation type="journal article" date="2009" name="Proc. Natl. Acad. Sci. U.S.A.">
        <title>The genomic basis of trophic strategy in marine bacteria.</title>
        <authorList>
            <person name="Lauro F.M."/>
            <person name="McDougald D."/>
            <person name="Thomas T."/>
            <person name="Williams T.J."/>
            <person name="Egan S."/>
            <person name="Rice S."/>
            <person name="DeMaere M.Z."/>
            <person name="Ting L."/>
            <person name="Ertan H."/>
            <person name="Johnson J."/>
            <person name="Ferriera S."/>
            <person name="Lapidus A."/>
            <person name="Anderson I."/>
            <person name="Kyrpides N."/>
            <person name="Munk A.C."/>
            <person name="Detter C."/>
            <person name="Han C.S."/>
            <person name="Brown M.V."/>
            <person name="Robb F.T."/>
            <person name="Kjelleberg S."/>
            <person name="Cavicchioli R."/>
        </authorList>
    </citation>
    <scope>NUCLEOTIDE SEQUENCE [LARGE SCALE GENOMIC DNA]</scope>
    <source>
        <strain>DSM 13593 / LMG 18877 / RB2256</strain>
    </source>
</reference>
<dbReference type="EC" id="6.1.1.15" evidence="1"/>
<dbReference type="EMBL" id="CP000356">
    <property type="protein sequence ID" value="ABF52945.1"/>
    <property type="molecule type" value="Genomic_DNA"/>
</dbReference>
<dbReference type="SMR" id="Q1GTS7"/>
<dbReference type="STRING" id="317655.Sala_1230"/>
<dbReference type="KEGG" id="sal:Sala_1230"/>
<dbReference type="eggNOG" id="COG0442">
    <property type="taxonomic scope" value="Bacteria"/>
</dbReference>
<dbReference type="HOGENOM" id="CLU_001882_4_2_5"/>
<dbReference type="Proteomes" id="UP000006578">
    <property type="component" value="Chromosome"/>
</dbReference>
<dbReference type="GO" id="GO:0017101">
    <property type="term" value="C:aminoacyl-tRNA synthetase multienzyme complex"/>
    <property type="evidence" value="ECO:0007669"/>
    <property type="project" value="TreeGrafter"/>
</dbReference>
<dbReference type="GO" id="GO:0005737">
    <property type="term" value="C:cytoplasm"/>
    <property type="evidence" value="ECO:0007669"/>
    <property type="project" value="UniProtKB-SubCell"/>
</dbReference>
<dbReference type="GO" id="GO:0005524">
    <property type="term" value="F:ATP binding"/>
    <property type="evidence" value="ECO:0007669"/>
    <property type="project" value="UniProtKB-UniRule"/>
</dbReference>
<dbReference type="GO" id="GO:0004827">
    <property type="term" value="F:proline-tRNA ligase activity"/>
    <property type="evidence" value="ECO:0007669"/>
    <property type="project" value="UniProtKB-UniRule"/>
</dbReference>
<dbReference type="GO" id="GO:0006433">
    <property type="term" value="P:prolyl-tRNA aminoacylation"/>
    <property type="evidence" value="ECO:0007669"/>
    <property type="project" value="UniProtKB-UniRule"/>
</dbReference>
<dbReference type="CDD" id="cd00778">
    <property type="entry name" value="ProRS_core_arch_euk"/>
    <property type="match status" value="1"/>
</dbReference>
<dbReference type="FunFam" id="3.30.930.10:FF:000037">
    <property type="entry name" value="Proline--tRNA ligase"/>
    <property type="match status" value="1"/>
</dbReference>
<dbReference type="Gene3D" id="3.40.50.800">
    <property type="entry name" value="Anticodon-binding domain"/>
    <property type="match status" value="1"/>
</dbReference>
<dbReference type="Gene3D" id="3.30.930.10">
    <property type="entry name" value="Bira Bifunctional Protein, Domain 2"/>
    <property type="match status" value="1"/>
</dbReference>
<dbReference type="Gene3D" id="3.30.110.30">
    <property type="entry name" value="C-terminal domain of ProRS"/>
    <property type="match status" value="1"/>
</dbReference>
<dbReference type="HAMAP" id="MF_01571">
    <property type="entry name" value="Pro_tRNA_synth_type3"/>
    <property type="match status" value="1"/>
</dbReference>
<dbReference type="InterPro" id="IPR002314">
    <property type="entry name" value="aa-tRNA-synt_IIb"/>
</dbReference>
<dbReference type="InterPro" id="IPR006195">
    <property type="entry name" value="aa-tRNA-synth_II"/>
</dbReference>
<dbReference type="InterPro" id="IPR045864">
    <property type="entry name" value="aa-tRNA-synth_II/BPL/LPL"/>
</dbReference>
<dbReference type="InterPro" id="IPR004154">
    <property type="entry name" value="Anticodon-bd"/>
</dbReference>
<dbReference type="InterPro" id="IPR036621">
    <property type="entry name" value="Anticodon-bd_dom_sf"/>
</dbReference>
<dbReference type="InterPro" id="IPR004499">
    <property type="entry name" value="Pro-tRNA-ligase_IIa_arc-type"/>
</dbReference>
<dbReference type="InterPro" id="IPR016061">
    <property type="entry name" value="Pro-tRNA_ligase_II_C"/>
</dbReference>
<dbReference type="InterPro" id="IPR017449">
    <property type="entry name" value="Pro-tRNA_synth_II"/>
</dbReference>
<dbReference type="InterPro" id="IPR033721">
    <property type="entry name" value="ProRS_core_arch_euk"/>
</dbReference>
<dbReference type="PANTHER" id="PTHR43382:SF2">
    <property type="entry name" value="BIFUNCTIONAL GLUTAMATE_PROLINE--TRNA LIGASE"/>
    <property type="match status" value="1"/>
</dbReference>
<dbReference type="PANTHER" id="PTHR43382">
    <property type="entry name" value="PROLYL-TRNA SYNTHETASE"/>
    <property type="match status" value="1"/>
</dbReference>
<dbReference type="Pfam" id="PF03129">
    <property type="entry name" value="HGTP_anticodon"/>
    <property type="match status" value="1"/>
</dbReference>
<dbReference type="Pfam" id="PF00587">
    <property type="entry name" value="tRNA-synt_2b"/>
    <property type="match status" value="1"/>
</dbReference>
<dbReference type="SMART" id="SM00946">
    <property type="entry name" value="ProRS-C_1"/>
    <property type="match status" value="1"/>
</dbReference>
<dbReference type="SUPFAM" id="SSF64586">
    <property type="entry name" value="C-terminal domain of ProRS"/>
    <property type="match status" value="1"/>
</dbReference>
<dbReference type="SUPFAM" id="SSF52954">
    <property type="entry name" value="Class II aaRS ABD-related"/>
    <property type="match status" value="1"/>
</dbReference>
<dbReference type="SUPFAM" id="SSF55681">
    <property type="entry name" value="Class II aaRS and biotin synthetases"/>
    <property type="match status" value="1"/>
</dbReference>
<dbReference type="PROSITE" id="PS50862">
    <property type="entry name" value="AA_TRNA_LIGASE_II"/>
    <property type="match status" value="1"/>
</dbReference>
<comment type="function">
    <text evidence="1">Catalyzes the attachment of proline to tRNA(Pro) in a two-step reaction: proline is first activated by ATP to form Pro-AMP and then transferred to the acceptor end of tRNA(Pro).</text>
</comment>
<comment type="catalytic activity">
    <reaction evidence="1">
        <text>tRNA(Pro) + L-proline + ATP = L-prolyl-tRNA(Pro) + AMP + diphosphate</text>
        <dbReference type="Rhea" id="RHEA:14305"/>
        <dbReference type="Rhea" id="RHEA-COMP:9700"/>
        <dbReference type="Rhea" id="RHEA-COMP:9702"/>
        <dbReference type="ChEBI" id="CHEBI:30616"/>
        <dbReference type="ChEBI" id="CHEBI:33019"/>
        <dbReference type="ChEBI" id="CHEBI:60039"/>
        <dbReference type="ChEBI" id="CHEBI:78442"/>
        <dbReference type="ChEBI" id="CHEBI:78532"/>
        <dbReference type="ChEBI" id="CHEBI:456215"/>
        <dbReference type="EC" id="6.1.1.15"/>
    </reaction>
</comment>
<comment type="subunit">
    <text evidence="1">Homodimer.</text>
</comment>
<comment type="subcellular location">
    <subcellularLocation>
        <location evidence="1">Cytoplasm</location>
    </subcellularLocation>
</comment>
<comment type="domain">
    <text evidence="1">Consists of three domains: the N-terminal catalytic domain, the anticodon-binding domain and the C-terminal extension.</text>
</comment>
<comment type="similarity">
    <text evidence="1">Belongs to the class-II aminoacyl-tRNA synthetase family. ProS type 3 subfamily.</text>
</comment>
<accession>Q1GTS7</accession>
<keyword id="KW-0030">Aminoacyl-tRNA synthetase</keyword>
<keyword id="KW-0067">ATP-binding</keyword>
<keyword id="KW-0963">Cytoplasm</keyword>
<keyword id="KW-0436">Ligase</keyword>
<keyword id="KW-0547">Nucleotide-binding</keyword>
<keyword id="KW-0648">Protein biosynthesis</keyword>
<keyword id="KW-1185">Reference proteome</keyword>
<protein>
    <recommendedName>
        <fullName evidence="1">Proline--tRNA ligase</fullName>
        <ecNumber evidence="1">6.1.1.15</ecNumber>
    </recommendedName>
    <alternativeName>
        <fullName evidence="1">Prolyl-tRNA synthetase</fullName>
        <shortName evidence="1">ProRS</shortName>
    </alternativeName>
</protein>
<sequence>MQKRNRRDVVPHPSIETGPMIKHALSVTRQADFAAWYQDVIAEADLAEESGVRGCMVIKPWGYGIWERIQTVMDAAIKDAGVQNAYFPLFIPLSFFEKEADHVDGFAKEMAVVTHHRLIADSKGKLVPDPEAKLEEPLIVRPTSETVIGAAMSRWVQSWRDLPLKVNQWANVVRWEMRTRMFLRTSEFLWQEGHTAHADRDDAMAETLRALEMYRSFAEDVLAMPVIAGEKPENERFPGAVATYSIEAMMQDGKALQAGTSHYLGTGFAEAAGIRYQDRDGGHSLCHTTSWGTSTRMIGGVIMTHGDDDGLRCPPRIAPHQIVIVPMLRDNGEDAAILDYCRDLESRLKALDAFGEPVRVLLDTGANKAQTKRWGWVKKGAPIIVEVGPRDVAGGNVAVIRRDRLYQESGKLNSAFVAKGDFIADAAATLEDIQASLYAEARERLDANIRRDVTDLAAHFSGEDRFVGWAEVQWARPTGGALDRIVEQLKALKLTMRNTPLDAAPADSACIFTGEPAVERVLIGRTY</sequence>
<gene>
    <name evidence="1" type="primary">proS</name>
    <name type="ordered locus">Sala_1230</name>
</gene>
<organism>
    <name type="scientific">Sphingopyxis alaskensis (strain DSM 13593 / LMG 18877 / RB2256)</name>
    <name type="common">Sphingomonas alaskensis</name>
    <dbReference type="NCBI Taxonomy" id="317655"/>
    <lineage>
        <taxon>Bacteria</taxon>
        <taxon>Pseudomonadati</taxon>
        <taxon>Pseudomonadota</taxon>
        <taxon>Alphaproteobacteria</taxon>
        <taxon>Sphingomonadales</taxon>
        <taxon>Sphingomonadaceae</taxon>
        <taxon>Sphingopyxis</taxon>
    </lineage>
</organism>
<name>SYP_SPHAL</name>
<feature type="chain" id="PRO_0000288416" description="Proline--tRNA ligase">
    <location>
        <begin position="1"/>
        <end position="527"/>
    </location>
</feature>